<accession>P44423</accession>
<gene>
    <name type="primary">hisC1</name>
    <name type="synonym">hisC</name>
    <name type="ordered locus">HI_0470</name>
</gene>
<sequence>MNDYNSHILQWKKTIMTITTLSRQNIQALTPYQSARKLGGNGTIWLNANEYPTSPEFQLSGKDLNRYPEPQPQRVVQAYANYAGVSTENVLVTRGGDEGIELIIHTFCEPKQDAILFCPPTYGMYAVSAETAGVLSKTVPLTDDFQLNLPEIKNHLNDVKVVFVCSPNNPTGNLLKQSDILDLLQITAGKAIVVVDEAYIEFCPEASVINLLKNYPHLAIIRTLSKAFALAGLRCGFVLANPELIDILSKVIAPYPIPVPSADLAEQALRPSNIATVQALTQELLSNRQWLAKALLVLHQVEKVYESEANYLLIKCQNGQAVFKALWEQGIILRDQNKTLHLQNCIRITVGTRNECEKVVEAIKEVK</sequence>
<reference key="1">
    <citation type="journal article" date="1995" name="Science">
        <title>Whole-genome random sequencing and assembly of Haemophilus influenzae Rd.</title>
        <authorList>
            <person name="Fleischmann R.D."/>
            <person name="Adams M.D."/>
            <person name="White O."/>
            <person name="Clayton R.A."/>
            <person name="Kirkness E.F."/>
            <person name="Kerlavage A.R."/>
            <person name="Bult C.J."/>
            <person name="Tomb J.-F."/>
            <person name="Dougherty B.A."/>
            <person name="Merrick J.M."/>
            <person name="McKenney K."/>
            <person name="Sutton G.G."/>
            <person name="FitzHugh W."/>
            <person name="Fields C.A."/>
            <person name="Gocayne J.D."/>
            <person name="Scott J.D."/>
            <person name="Shirley R."/>
            <person name="Liu L.-I."/>
            <person name="Glodek A."/>
            <person name="Kelley J.M."/>
            <person name="Weidman J.F."/>
            <person name="Phillips C.A."/>
            <person name="Spriggs T."/>
            <person name="Hedblom E."/>
            <person name="Cotton M.D."/>
            <person name="Utterback T.R."/>
            <person name="Hanna M.C."/>
            <person name="Nguyen D.T."/>
            <person name="Saudek D.M."/>
            <person name="Brandon R.C."/>
            <person name="Fine L.D."/>
            <person name="Fritchman J.L."/>
            <person name="Fuhrmann J.L."/>
            <person name="Geoghagen N.S.M."/>
            <person name="Gnehm C.L."/>
            <person name="McDonald L.A."/>
            <person name="Small K.V."/>
            <person name="Fraser C.M."/>
            <person name="Smith H.O."/>
            <person name="Venter J.C."/>
        </authorList>
    </citation>
    <scope>NUCLEOTIDE SEQUENCE [LARGE SCALE GENOMIC DNA]</scope>
    <source>
        <strain>ATCC 51907 / DSM 11121 / KW20 / Rd</strain>
    </source>
</reference>
<proteinExistence type="inferred from homology"/>
<protein>
    <recommendedName>
        <fullName>Histidinol-phosphate aminotransferase 1</fullName>
        <ecNumber>2.6.1.9</ecNumber>
    </recommendedName>
    <alternativeName>
        <fullName>Imidazole acetol-phosphate transaminase 1</fullName>
    </alternativeName>
</protein>
<comment type="catalytic activity">
    <reaction>
        <text>L-histidinol phosphate + 2-oxoglutarate = 3-(imidazol-4-yl)-2-oxopropyl phosphate + L-glutamate</text>
        <dbReference type="Rhea" id="RHEA:23744"/>
        <dbReference type="ChEBI" id="CHEBI:16810"/>
        <dbReference type="ChEBI" id="CHEBI:29985"/>
        <dbReference type="ChEBI" id="CHEBI:57766"/>
        <dbReference type="ChEBI" id="CHEBI:57980"/>
        <dbReference type="EC" id="2.6.1.9"/>
    </reaction>
</comment>
<comment type="cofactor">
    <cofactor evidence="1">
        <name>pyridoxal 5'-phosphate</name>
        <dbReference type="ChEBI" id="CHEBI:597326"/>
    </cofactor>
</comment>
<comment type="pathway">
    <text>Amino-acid biosynthesis; L-histidine biosynthesis; L-histidine from 5-phospho-alpha-D-ribose 1-diphosphate: step 7/9.</text>
</comment>
<comment type="subunit">
    <text evidence="1">Homodimer.</text>
</comment>
<comment type="similarity">
    <text evidence="2">Belongs to the class-II pyridoxal-phosphate-dependent aminotransferase family. Histidinol-phosphate aminotransferase subfamily.</text>
</comment>
<dbReference type="EC" id="2.6.1.9"/>
<dbReference type="EMBL" id="L42023">
    <property type="protein sequence ID" value="AAC22129.1"/>
    <property type="molecule type" value="Genomic_DNA"/>
</dbReference>
<dbReference type="PIR" id="E64070">
    <property type="entry name" value="E64070"/>
</dbReference>
<dbReference type="RefSeq" id="NP_438631.1">
    <property type="nucleotide sequence ID" value="NC_000907.1"/>
</dbReference>
<dbReference type="SMR" id="P44423"/>
<dbReference type="STRING" id="71421.HI_0470"/>
<dbReference type="EnsemblBacteria" id="AAC22129">
    <property type="protein sequence ID" value="AAC22129"/>
    <property type="gene ID" value="HI_0470"/>
</dbReference>
<dbReference type="KEGG" id="hin:HI_0470"/>
<dbReference type="PATRIC" id="fig|71421.8.peg.490"/>
<dbReference type="eggNOG" id="COG0079">
    <property type="taxonomic scope" value="Bacteria"/>
</dbReference>
<dbReference type="HOGENOM" id="CLU_017584_3_1_6"/>
<dbReference type="OrthoDB" id="9813612at2"/>
<dbReference type="PhylomeDB" id="P44423"/>
<dbReference type="BioCyc" id="HINF71421:G1GJ1-486-MONOMER"/>
<dbReference type="UniPathway" id="UPA00031">
    <property type="reaction ID" value="UER00012"/>
</dbReference>
<dbReference type="Proteomes" id="UP000000579">
    <property type="component" value="Chromosome"/>
</dbReference>
<dbReference type="GO" id="GO:0004400">
    <property type="term" value="F:histidinol-phosphate transaminase activity"/>
    <property type="evidence" value="ECO:0007669"/>
    <property type="project" value="UniProtKB-UniRule"/>
</dbReference>
<dbReference type="GO" id="GO:0030170">
    <property type="term" value="F:pyridoxal phosphate binding"/>
    <property type="evidence" value="ECO:0007669"/>
    <property type="project" value="InterPro"/>
</dbReference>
<dbReference type="GO" id="GO:0000105">
    <property type="term" value="P:L-histidine biosynthetic process"/>
    <property type="evidence" value="ECO:0007669"/>
    <property type="project" value="UniProtKB-UniRule"/>
</dbReference>
<dbReference type="CDD" id="cd00609">
    <property type="entry name" value="AAT_like"/>
    <property type="match status" value="1"/>
</dbReference>
<dbReference type="Gene3D" id="3.90.1150.10">
    <property type="entry name" value="Aspartate Aminotransferase, domain 1"/>
    <property type="match status" value="1"/>
</dbReference>
<dbReference type="Gene3D" id="3.40.640.10">
    <property type="entry name" value="Type I PLP-dependent aspartate aminotransferase-like (Major domain)"/>
    <property type="match status" value="1"/>
</dbReference>
<dbReference type="HAMAP" id="MF_01023">
    <property type="entry name" value="HisC_aminotrans_2"/>
    <property type="match status" value="1"/>
</dbReference>
<dbReference type="InterPro" id="IPR001917">
    <property type="entry name" value="Aminotrans_II_pyridoxalP_BS"/>
</dbReference>
<dbReference type="InterPro" id="IPR004839">
    <property type="entry name" value="Aminotransferase_I/II_large"/>
</dbReference>
<dbReference type="InterPro" id="IPR005861">
    <property type="entry name" value="HisP_aminotrans"/>
</dbReference>
<dbReference type="InterPro" id="IPR015424">
    <property type="entry name" value="PyrdxlP-dep_Trfase"/>
</dbReference>
<dbReference type="InterPro" id="IPR015421">
    <property type="entry name" value="PyrdxlP-dep_Trfase_major"/>
</dbReference>
<dbReference type="InterPro" id="IPR015422">
    <property type="entry name" value="PyrdxlP-dep_Trfase_small"/>
</dbReference>
<dbReference type="NCBIfam" id="TIGR01141">
    <property type="entry name" value="hisC"/>
    <property type="match status" value="1"/>
</dbReference>
<dbReference type="PANTHER" id="PTHR42885:SF2">
    <property type="entry name" value="HISTIDINOL-PHOSPHATE AMINOTRANSFERASE"/>
    <property type="match status" value="1"/>
</dbReference>
<dbReference type="PANTHER" id="PTHR42885">
    <property type="entry name" value="HISTIDINOL-PHOSPHATE AMINOTRANSFERASE-RELATED"/>
    <property type="match status" value="1"/>
</dbReference>
<dbReference type="Pfam" id="PF00155">
    <property type="entry name" value="Aminotran_1_2"/>
    <property type="match status" value="1"/>
</dbReference>
<dbReference type="SUPFAM" id="SSF53383">
    <property type="entry name" value="PLP-dependent transferases"/>
    <property type="match status" value="1"/>
</dbReference>
<dbReference type="PROSITE" id="PS00599">
    <property type="entry name" value="AA_TRANSFER_CLASS_2"/>
    <property type="match status" value="1"/>
</dbReference>
<evidence type="ECO:0000250" key="1"/>
<evidence type="ECO:0000305" key="2"/>
<name>HIS81_HAEIN</name>
<feature type="chain" id="PRO_0000153368" description="Histidinol-phosphate aminotransferase 1">
    <location>
        <begin position="1"/>
        <end position="367"/>
    </location>
</feature>
<feature type="modified residue" description="N6-(pyridoxal phosphate)lysine" evidence="1">
    <location>
        <position position="226"/>
    </location>
</feature>
<organism>
    <name type="scientific">Haemophilus influenzae (strain ATCC 51907 / DSM 11121 / KW20 / Rd)</name>
    <dbReference type="NCBI Taxonomy" id="71421"/>
    <lineage>
        <taxon>Bacteria</taxon>
        <taxon>Pseudomonadati</taxon>
        <taxon>Pseudomonadota</taxon>
        <taxon>Gammaproteobacteria</taxon>
        <taxon>Pasteurellales</taxon>
        <taxon>Pasteurellaceae</taxon>
        <taxon>Haemophilus</taxon>
    </lineage>
</organism>
<keyword id="KW-0028">Amino-acid biosynthesis</keyword>
<keyword id="KW-0032">Aminotransferase</keyword>
<keyword id="KW-0368">Histidine biosynthesis</keyword>
<keyword id="KW-0663">Pyridoxal phosphate</keyword>
<keyword id="KW-1185">Reference proteome</keyword>
<keyword id="KW-0808">Transferase</keyword>